<reference key="1">
    <citation type="submission" date="2007-06" db="EMBL/GenBank/DDBJ databases">
        <authorList>
            <person name="Dodson R.J."/>
            <person name="Harkins D."/>
            <person name="Paulsen I.T."/>
        </authorList>
    </citation>
    <scope>NUCLEOTIDE SEQUENCE [LARGE SCALE GENOMIC DNA]</scope>
    <source>
        <strain>DSM 24068 / PA7</strain>
    </source>
</reference>
<sequence length="277" mass="30776">MEWWTAFQAFILGVVEGLTEFLPISSTGHQIIVADLIGFGGERAKAFNIIIQLAAILAVVWEFRGKIFQVVRDLPSQHQAQRFTVNLLIAFFPAVILGVLFADLIHEWLFNPITVALALVVGGVIMLWAERRQHVIRAEHVDDMTWKDALKIGCAQCLAMVPGTSRSGATIIGGLLFGLSRKAATEFSFFLAMPTMVGAAVYSGYKYRELFRPEDLPVFAVGFVTSFVFAMVAVRALLKFIGNHSYAAFAWYRIAFGLLILATWQFHLIDWSTAGDL</sequence>
<name>UPPP_PSEP7</name>
<evidence type="ECO:0000255" key="1">
    <source>
        <dbReference type="HAMAP-Rule" id="MF_01006"/>
    </source>
</evidence>
<organism>
    <name type="scientific">Pseudomonas paraeruginosa (strain DSM 24068 / PA7)</name>
    <name type="common">Pseudomonas aeruginosa (strain PA7)</name>
    <dbReference type="NCBI Taxonomy" id="381754"/>
    <lineage>
        <taxon>Bacteria</taxon>
        <taxon>Pseudomonadati</taxon>
        <taxon>Pseudomonadota</taxon>
        <taxon>Gammaproteobacteria</taxon>
        <taxon>Pseudomonadales</taxon>
        <taxon>Pseudomonadaceae</taxon>
        <taxon>Pseudomonas</taxon>
        <taxon>Pseudomonas paraeruginosa</taxon>
    </lineage>
</organism>
<dbReference type="EC" id="3.6.1.27" evidence="1"/>
<dbReference type="EMBL" id="CP000744">
    <property type="protein sequence ID" value="ABR82234.1"/>
    <property type="molecule type" value="Genomic_DNA"/>
</dbReference>
<dbReference type="RefSeq" id="WP_012076067.1">
    <property type="nucleotide sequence ID" value="NC_009656.1"/>
</dbReference>
<dbReference type="SMR" id="A6V6L2"/>
<dbReference type="KEGG" id="pap:PSPA7_3337"/>
<dbReference type="HOGENOM" id="CLU_060296_2_0_6"/>
<dbReference type="Proteomes" id="UP000001582">
    <property type="component" value="Chromosome"/>
</dbReference>
<dbReference type="GO" id="GO:0005886">
    <property type="term" value="C:plasma membrane"/>
    <property type="evidence" value="ECO:0007669"/>
    <property type="project" value="UniProtKB-SubCell"/>
</dbReference>
<dbReference type="GO" id="GO:0050380">
    <property type="term" value="F:undecaprenyl-diphosphatase activity"/>
    <property type="evidence" value="ECO:0007669"/>
    <property type="project" value="UniProtKB-UniRule"/>
</dbReference>
<dbReference type="GO" id="GO:0071555">
    <property type="term" value="P:cell wall organization"/>
    <property type="evidence" value="ECO:0007669"/>
    <property type="project" value="UniProtKB-KW"/>
</dbReference>
<dbReference type="GO" id="GO:0009252">
    <property type="term" value="P:peptidoglycan biosynthetic process"/>
    <property type="evidence" value="ECO:0007669"/>
    <property type="project" value="UniProtKB-KW"/>
</dbReference>
<dbReference type="GO" id="GO:0008360">
    <property type="term" value="P:regulation of cell shape"/>
    <property type="evidence" value="ECO:0007669"/>
    <property type="project" value="UniProtKB-KW"/>
</dbReference>
<dbReference type="GO" id="GO:0046677">
    <property type="term" value="P:response to antibiotic"/>
    <property type="evidence" value="ECO:0007669"/>
    <property type="project" value="UniProtKB-UniRule"/>
</dbReference>
<dbReference type="HAMAP" id="MF_01006">
    <property type="entry name" value="Undec_diphosphatase"/>
    <property type="match status" value="1"/>
</dbReference>
<dbReference type="InterPro" id="IPR003824">
    <property type="entry name" value="UppP"/>
</dbReference>
<dbReference type="NCBIfam" id="NF001389">
    <property type="entry name" value="PRK00281.1-2"/>
    <property type="match status" value="1"/>
</dbReference>
<dbReference type="NCBIfam" id="NF001390">
    <property type="entry name" value="PRK00281.1-4"/>
    <property type="match status" value="1"/>
</dbReference>
<dbReference type="NCBIfam" id="TIGR00753">
    <property type="entry name" value="undec_PP_bacA"/>
    <property type="match status" value="1"/>
</dbReference>
<dbReference type="PANTHER" id="PTHR30622">
    <property type="entry name" value="UNDECAPRENYL-DIPHOSPHATASE"/>
    <property type="match status" value="1"/>
</dbReference>
<dbReference type="PANTHER" id="PTHR30622:SF3">
    <property type="entry name" value="UNDECAPRENYL-DIPHOSPHATASE"/>
    <property type="match status" value="1"/>
</dbReference>
<dbReference type="Pfam" id="PF02673">
    <property type="entry name" value="BacA"/>
    <property type="match status" value="1"/>
</dbReference>
<protein>
    <recommendedName>
        <fullName evidence="1">Undecaprenyl-diphosphatase</fullName>
        <ecNumber evidence="1">3.6.1.27</ecNumber>
    </recommendedName>
    <alternativeName>
        <fullName evidence="1">Bacitracin resistance protein</fullName>
    </alternativeName>
    <alternativeName>
        <fullName evidence="1">Undecaprenyl pyrophosphate phosphatase</fullName>
    </alternativeName>
</protein>
<accession>A6V6L2</accession>
<feature type="chain" id="PRO_1000062807" description="Undecaprenyl-diphosphatase">
    <location>
        <begin position="1"/>
        <end position="277"/>
    </location>
</feature>
<feature type="transmembrane region" description="Helical" evidence="1">
    <location>
        <begin position="47"/>
        <end position="67"/>
    </location>
</feature>
<feature type="transmembrane region" description="Helical" evidence="1">
    <location>
        <begin position="85"/>
        <end position="105"/>
    </location>
</feature>
<feature type="transmembrane region" description="Helical" evidence="1">
    <location>
        <begin position="108"/>
        <end position="128"/>
    </location>
</feature>
<feature type="transmembrane region" description="Helical" evidence="1">
    <location>
        <begin position="183"/>
        <end position="203"/>
    </location>
</feature>
<feature type="transmembrane region" description="Helical" evidence="1">
    <location>
        <begin position="218"/>
        <end position="238"/>
    </location>
</feature>
<feature type="transmembrane region" description="Helical" evidence="1">
    <location>
        <begin position="249"/>
        <end position="269"/>
    </location>
</feature>
<keyword id="KW-0046">Antibiotic resistance</keyword>
<keyword id="KW-0997">Cell inner membrane</keyword>
<keyword id="KW-1003">Cell membrane</keyword>
<keyword id="KW-0133">Cell shape</keyword>
<keyword id="KW-0961">Cell wall biogenesis/degradation</keyword>
<keyword id="KW-0378">Hydrolase</keyword>
<keyword id="KW-0472">Membrane</keyword>
<keyword id="KW-0573">Peptidoglycan synthesis</keyword>
<keyword id="KW-0812">Transmembrane</keyword>
<keyword id="KW-1133">Transmembrane helix</keyword>
<comment type="function">
    <text evidence="1">Catalyzes the dephosphorylation of undecaprenyl diphosphate (UPP). Confers resistance to bacitracin.</text>
</comment>
<comment type="catalytic activity">
    <reaction evidence="1">
        <text>di-trans,octa-cis-undecaprenyl diphosphate + H2O = di-trans,octa-cis-undecaprenyl phosphate + phosphate + H(+)</text>
        <dbReference type="Rhea" id="RHEA:28094"/>
        <dbReference type="ChEBI" id="CHEBI:15377"/>
        <dbReference type="ChEBI" id="CHEBI:15378"/>
        <dbReference type="ChEBI" id="CHEBI:43474"/>
        <dbReference type="ChEBI" id="CHEBI:58405"/>
        <dbReference type="ChEBI" id="CHEBI:60392"/>
        <dbReference type="EC" id="3.6.1.27"/>
    </reaction>
</comment>
<comment type="subcellular location">
    <subcellularLocation>
        <location evidence="1">Cell inner membrane</location>
        <topology evidence="1">Multi-pass membrane protein</topology>
    </subcellularLocation>
</comment>
<comment type="miscellaneous">
    <text>Bacitracin is thought to be involved in the inhibition of peptidoglycan synthesis by sequestering undecaprenyl diphosphate, thereby reducing the pool of lipid carrier available.</text>
</comment>
<comment type="similarity">
    <text evidence="1">Belongs to the UppP family.</text>
</comment>
<proteinExistence type="inferred from homology"/>
<gene>
    <name evidence="1" type="primary">uppP</name>
    <name type="ordered locus">PSPA7_3337</name>
</gene>